<keyword id="KW-0963">Cytoplasm</keyword>
<keyword id="KW-0408">Iron</keyword>
<keyword id="KW-0411">Iron-sulfur</keyword>
<keyword id="KW-0479">Metal-binding</keyword>
<keyword id="KW-0560">Oxidoreductase</keyword>
<accession>A7Z4H7</accession>
<gene>
    <name evidence="1" type="primary">cysH</name>
    <name type="ordered locus">RBAM_015400</name>
</gene>
<dbReference type="EC" id="1.8.4.10" evidence="1"/>
<dbReference type="EMBL" id="CP000560">
    <property type="protein sequence ID" value="ABS73903.1"/>
    <property type="molecule type" value="Genomic_DNA"/>
</dbReference>
<dbReference type="RefSeq" id="WP_003154369.1">
    <property type="nucleotide sequence ID" value="NC_009725.2"/>
</dbReference>
<dbReference type="SMR" id="A7Z4H7"/>
<dbReference type="GeneID" id="93080673"/>
<dbReference type="KEGG" id="bay:RBAM_015400"/>
<dbReference type="HOGENOM" id="CLU_044089_2_1_9"/>
<dbReference type="Proteomes" id="UP000001120">
    <property type="component" value="Chromosome"/>
</dbReference>
<dbReference type="GO" id="GO:0005737">
    <property type="term" value="C:cytoplasm"/>
    <property type="evidence" value="ECO:0007669"/>
    <property type="project" value="UniProtKB-SubCell"/>
</dbReference>
<dbReference type="GO" id="GO:0051539">
    <property type="term" value="F:4 iron, 4 sulfur cluster binding"/>
    <property type="evidence" value="ECO:0007669"/>
    <property type="project" value="UniProtKB-UniRule"/>
</dbReference>
<dbReference type="GO" id="GO:0043866">
    <property type="term" value="F:adenylyl-sulfate reductase (thioredoxin) activity"/>
    <property type="evidence" value="ECO:0007669"/>
    <property type="project" value="UniProtKB-EC"/>
</dbReference>
<dbReference type="GO" id="GO:0046872">
    <property type="term" value="F:metal ion binding"/>
    <property type="evidence" value="ECO:0007669"/>
    <property type="project" value="UniProtKB-KW"/>
</dbReference>
<dbReference type="GO" id="GO:0004604">
    <property type="term" value="F:phosphoadenylyl-sulfate reductase (thioredoxin) activity"/>
    <property type="evidence" value="ECO:0007669"/>
    <property type="project" value="UniProtKB-UniRule"/>
</dbReference>
<dbReference type="GO" id="GO:0019344">
    <property type="term" value="P:cysteine biosynthetic process"/>
    <property type="evidence" value="ECO:0007669"/>
    <property type="project" value="InterPro"/>
</dbReference>
<dbReference type="GO" id="GO:0070814">
    <property type="term" value="P:hydrogen sulfide biosynthetic process"/>
    <property type="evidence" value="ECO:0007669"/>
    <property type="project" value="UniProtKB-UniRule"/>
</dbReference>
<dbReference type="GO" id="GO:0019379">
    <property type="term" value="P:sulfate assimilation, phosphoadenylyl sulfate reduction by phosphoadenylyl-sulfate reductase (thioredoxin)"/>
    <property type="evidence" value="ECO:0007669"/>
    <property type="project" value="UniProtKB-UniRule"/>
</dbReference>
<dbReference type="CDD" id="cd23945">
    <property type="entry name" value="PAPS_reductase"/>
    <property type="match status" value="1"/>
</dbReference>
<dbReference type="FunFam" id="3.40.50.620:FF:000095">
    <property type="entry name" value="Phosphoadenosine phosphosulfate reductase"/>
    <property type="match status" value="1"/>
</dbReference>
<dbReference type="Gene3D" id="3.40.50.620">
    <property type="entry name" value="HUPs"/>
    <property type="match status" value="1"/>
</dbReference>
<dbReference type="HAMAP" id="MF_00063">
    <property type="entry name" value="CysH"/>
    <property type="match status" value="1"/>
</dbReference>
<dbReference type="InterPro" id="IPR011798">
    <property type="entry name" value="APS_reductase"/>
</dbReference>
<dbReference type="InterPro" id="IPR004511">
    <property type="entry name" value="PAPS/APS_Rdtase"/>
</dbReference>
<dbReference type="InterPro" id="IPR002500">
    <property type="entry name" value="PAPS_reduct_dom"/>
</dbReference>
<dbReference type="InterPro" id="IPR014729">
    <property type="entry name" value="Rossmann-like_a/b/a_fold"/>
</dbReference>
<dbReference type="NCBIfam" id="TIGR02055">
    <property type="entry name" value="APS_reductase"/>
    <property type="match status" value="1"/>
</dbReference>
<dbReference type="NCBIfam" id="TIGR00434">
    <property type="entry name" value="cysH"/>
    <property type="match status" value="1"/>
</dbReference>
<dbReference type="NCBIfam" id="NF002537">
    <property type="entry name" value="PRK02090.1"/>
    <property type="match status" value="1"/>
</dbReference>
<dbReference type="PANTHER" id="PTHR46509">
    <property type="entry name" value="PHOSPHOADENOSINE PHOSPHOSULFATE REDUCTASE"/>
    <property type="match status" value="1"/>
</dbReference>
<dbReference type="PANTHER" id="PTHR46509:SF1">
    <property type="entry name" value="PHOSPHOADENOSINE PHOSPHOSULFATE REDUCTASE"/>
    <property type="match status" value="1"/>
</dbReference>
<dbReference type="Pfam" id="PF01507">
    <property type="entry name" value="PAPS_reduct"/>
    <property type="match status" value="1"/>
</dbReference>
<dbReference type="PIRSF" id="PIRSF000857">
    <property type="entry name" value="PAPS_reductase"/>
    <property type="match status" value="1"/>
</dbReference>
<dbReference type="SUPFAM" id="SSF52402">
    <property type="entry name" value="Adenine nucleotide alpha hydrolases-like"/>
    <property type="match status" value="1"/>
</dbReference>
<organism>
    <name type="scientific">Bacillus velezensis (strain DSM 23117 / BGSC 10A6 / LMG 26770 / FZB42)</name>
    <name type="common">Bacillus amyloliquefaciens subsp. plantarum</name>
    <dbReference type="NCBI Taxonomy" id="326423"/>
    <lineage>
        <taxon>Bacteria</taxon>
        <taxon>Bacillati</taxon>
        <taxon>Bacillota</taxon>
        <taxon>Bacilli</taxon>
        <taxon>Bacillales</taxon>
        <taxon>Bacillaceae</taxon>
        <taxon>Bacillus</taxon>
        <taxon>Bacillus amyloliquefaciens group</taxon>
    </lineage>
</organism>
<feature type="chain" id="PRO_1000008914" description="Adenosine 5'-phosphosulfate reductase">
    <location>
        <begin position="1"/>
        <end position="233"/>
    </location>
</feature>
<feature type="active site" description="Nucleophile; cysteine thiosulfonate intermediate" evidence="1">
    <location>
        <position position="229"/>
    </location>
</feature>
<feature type="binding site" evidence="1">
    <location>
        <position position="120"/>
    </location>
    <ligand>
        <name>[4Fe-4S] cluster</name>
        <dbReference type="ChEBI" id="CHEBI:49883"/>
    </ligand>
</feature>
<feature type="binding site" evidence="1">
    <location>
        <position position="121"/>
    </location>
    <ligand>
        <name>[4Fe-4S] cluster</name>
        <dbReference type="ChEBI" id="CHEBI:49883"/>
    </ligand>
</feature>
<feature type="binding site" evidence="1">
    <location>
        <position position="203"/>
    </location>
    <ligand>
        <name>[4Fe-4S] cluster</name>
        <dbReference type="ChEBI" id="CHEBI:49883"/>
    </ligand>
</feature>
<feature type="binding site" evidence="1">
    <location>
        <position position="206"/>
    </location>
    <ligand>
        <name>[4Fe-4S] cluster</name>
        <dbReference type="ChEBI" id="CHEBI:49883"/>
    </ligand>
</feature>
<reference key="1">
    <citation type="journal article" date="2007" name="Nat. Biotechnol.">
        <title>Comparative analysis of the complete genome sequence of the plant growth-promoting bacterium Bacillus amyloliquefaciens FZB42.</title>
        <authorList>
            <person name="Chen X.H."/>
            <person name="Koumoutsi A."/>
            <person name="Scholz R."/>
            <person name="Eisenreich A."/>
            <person name="Schneider K."/>
            <person name="Heinemeyer I."/>
            <person name="Morgenstern B."/>
            <person name="Voss B."/>
            <person name="Hess W.R."/>
            <person name="Reva O."/>
            <person name="Junge H."/>
            <person name="Voigt B."/>
            <person name="Jungblut P.R."/>
            <person name="Vater J."/>
            <person name="Suessmuth R."/>
            <person name="Liesegang H."/>
            <person name="Strittmatter A."/>
            <person name="Gottschalk G."/>
            <person name="Borriss R."/>
        </authorList>
    </citation>
    <scope>NUCLEOTIDE SEQUENCE [LARGE SCALE GENOMIC DNA]</scope>
    <source>
        <strain>DSM 23117 / BGSC 10A6 / LMG 26770 / FZB42</strain>
    </source>
</reference>
<sequence length="233" mass="26812">MLTYDTWEEPAITFPEDDSYKGALSVLKWAYGHYGDQLVYACSFGIEGIVLIDLISKVKKDAEIVFLDTGLHFKETYETIEKVKERYPGLNIILKKPSLTLEEQAEAHGDKLWEREPNQCCYIRKILPLREALAGHPAWLSGLRRDQGPSRANTNFLNKDDKFQSIKVCPLIHWTWKDIWRYTSKHELDYNILHDQGYPSIGCEPCTSPAFTAEDLRSGRWNGMAKTECGLHE</sequence>
<proteinExistence type="inferred from homology"/>
<evidence type="ECO:0000255" key="1">
    <source>
        <dbReference type="HAMAP-Rule" id="MF_00063"/>
    </source>
</evidence>
<comment type="function">
    <text evidence="1">Catalyzes the formation of sulfite from adenosine 5'-phosphosulfate (APS) using thioredoxin as an electron donor.</text>
</comment>
<comment type="catalytic activity">
    <reaction evidence="1">
        <text>[thioredoxin]-disulfide + sulfite + AMP + 2 H(+) = adenosine 5'-phosphosulfate + [thioredoxin]-dithiol</text>
        <dbReference type="Rhea" id="RHEA:21976"/>
        <dbReference type="Rhea" id="RHEA-COMP:10698"/>
        <dbReference type="Rhea" id="RHEA-COMP:10700"/>
        <dbReference type="ChEBI" id="CHEBI:15378"/>
        <dbReference type="ChEBI" id="CHEBI:17359"/>
        <dbReference type="ChEBI" id="CHEBI:29950"/>
        <dbReference type="ChEBI" id="CHEBI:50058"/>
        <dbReference type="ChEBI" id="CHEBI:58243"/>
        <dbReference type="ChEBI" id="CHEBI:456215"/>
        <dbReference type="EC" id="1.8.4.10"/>
    </reaction>
</comment>
<comment type="cofactor">
    <cofactor evidence="1">
        <name>[4Fe-4S] cluster</name>
        <dbReference type="ChEBI" id="CHEBI:49883"/>
    </cofactor>
    <text evidence="1">Binds 1 [4Fe-4S] cluster per subunit.</text>
</comment>
<comment type="pathway">
    <text evidence="1">Sulfur metabolism; hydrogen sulfide biosynthesis; sulfite from sulfate.</text>
</comment>
<comment type="subcellular location">
    <subcellularLocation>
        <location evidence="1">Cytoplasm</location>
    </subcellularLocation>
</comment>
<comment type="similarity">
    <text evidence="1">Belongs to the PAPS reductase family. CysH subfamily.</text>
</comment>
<protein>
    <recommendedName>
        <fullName evidence="1">Adenosine 5'-phosphosulfate reductase</fullName>
        <shortName evidence="1">APS reductase</shortName>
        <ecNumber evidence="1">1.8.4.10</ecNumber>
    </recommendedName>
    <alternativeName>
        <fullName evidence="1">5'-adenylylsulfate reductase</fullName>
    </alternativeName>
    <alternativeName>
        <fullName evidence="1">Thioredoxin-dependent 5'-adenylylsulfate reductase</fullName>
    </alternativeName>
</protein>
<name>CYSH_BACVZ</name>